<organism>
    <name type="scientific">Escherichia coli O45:K1 (strain S88 / ExPEC)</name>
    <dbReference type="NCBI Taxonomy" id="585035"/>
    <lineage>
        <taxon>Bacteria</taxon>
        <taxon>Pseudomonadati</taxon>
        <taxon>Pseudomonadota</taxon>
        <taxon>Gammaproteobacteria</taxon>
        <taxon>Enterobacterales</taxon>
        <taxon>Enterobacteriaceae</taxon>
        <taxon>Escherichia</taxon>
    </lineage>
</organism>
<protein>
    <recommendedName>
        <fullName evidence="1">Ribosomal RNA small subunit methyltransferase A</fullName>
        <ecNumber evidence="1">2.1.1.182</ecNumber>
    </recommendedName>
    <alternativeName>
        <fullName evidence="1">16S rRNA (adenine(1518)-N(6)/adenine(1519)-N(6))-dimethyltransferase</fullName>
    </alternativeName>
    <alternativeName>
        <fullName evidence="1">16S rRNA dimethyladenosine transferase</fullName>
    </alternativeName>
    <alternativeName>
        <fullName evidence="1">16S rRNA dimethylase</fullName>
    </alternativeName>
    <alternativeName>
        <fullName evidence="1">S-adenosylmethionine-6-N', N'-adenosyl(rRNA) dimethyltransferase</fullName>
    </alternativeName>
</protein>
<accession>B7MAH6</accession>
<reference key="1">
    <citation type="journal article" date="2009" name="PLoS Genet.">
        <title>Organised genome dynamics in the Escherichia coli species results in highly diverse adaptive paths.</title>
        <authorList>
            <person name="Touchon M."/>
            <person name="Hoede C."/>
            <person name="Tenaillon O."/>
            <person name="Barbe V."/>
            <person name="Baeriswyl S."/>
            <person name="Bidet P."/>
            <person name="Bingen E."/>
            <person name="Bonacorsi S."/>
            <person name="Bouchier C."/>
            <person name="Bouvet O."/>
            <person name="Calteau A."/>
            <person name="Chiapello H."/>
            <person name="Clermont O."/>
            <person name="Cruveiller S."/>
            <person name="Danchin A."/>
            <person name="Diard M."/>
            <person name="Dossat C."/>
            <person name="Karoui M.E."/>
            <person name="Frapy E."/>
            <person name="Garry L."/>
            <person name="Ghigo J.M."/>
            <person name="Gilles A.M."/>
            <person name="Johnson J."/>
            <person name="Le Bouguenec C."/>
            <person name="Lescat M."/>
            <person name="Mangenot S."/>
            <person name="Martinez-Jehanne V."/>
            <person name="Matic I."/>
            <person name="Nassif X."/>
            <person name="Oztas S."/>
            <person name="Petit M.A."/>
            <person name="Pichon C."/>
            <person name="Rouy Z."/>
            <person name="Ruf C.S."/>
            <person name="Schneider D."/>
            <person name="Tourret J."/>
            <person name="Vacherie B."/>
            <person name="Vallenet D."/>
            <person name="Medigue C."/>
            <person name="Rocha E.P.C."/>
            <person name="Denamur E."/>
        </authorList>
    </citation>
    <scope>NUCLEOTIDE SEQUENCE [LARGE SCALE GENOMIC DNA]</scope>
    <source>
        <strain>S88 / ExPEC</strain>
    </source>
</reference>
<evidence type="ECO:0000255" key="1">
    <source>
        <dbReference type="HAMAP-Rule" id="MF_00607"/>
    </source>
</evidence>
<gene>
    <name evidence="1" type="primary">rsmA</name>
    <name evidence="1" type="synonym">ksgA</name>
    <name type="ordered locus">ECS88_0056</name>
</gene>
<dbReference type="EC" id="2.1.1.182" evidence="1"/>
<dbReference type="EMBL" id="CU928161">
    <property type="protein sequence ID" value="CAR01422.1"/>
    <property type="molecule type" value="Genomic_DNA"/>
</dbReference>
<dbReference type="RefSeq" id="WP_001065363.1">
    <property type="nucleotide sequence ID" value="NC_011742.1"/>
</dbReference>
<dbReference type="SMR" id="B7MAH6"/>
<dbReference type="KEGG" id="ecz:ECS88_0056"/>
<dbReference type="HOGENOM" id="CLU_041220_0_1_6"/>
<dbReference type="Proteomes" id="UP000000747">
    <property type="component" value="Chromosome"/>
</dbReference>
<dbReference type="GO" id="GO:0005829">
    <property type="term" value="C:cytosol"/>
    <property type="evidence" value="ECO:0007669"/>
    <property type="project" value="TreeGrafter"/>
</dbReference>
<dbReference type="GO" id="GO:0052908">
    <property type="term" value="F:16S rRNA (adenine(1518)-N(6)/adenine(1519)-N(6))-dimethyltransferase activity"/>
    <property type="evidence" value="ECO:0007669"/>
    <property type="project" value="UniProtKB-EC"/>
</dbReference>
<dbReference type="GO" id="GO:0003723">
    <property type="term" value="F:RNA binding"/>
    <property type="evidence" value="ECO:0007669"/>
    <property type="project" value="UniProtKB-KW"/>
</dbReference>
<dbReference type="FunFam" id="1.10.8.100:FF:000001">
    <property type="entry name" value="Ribosomal RNA small subunit methyltransferase A"/>
    <property type="match status" value="1"/>
</dbReference>
<dbReference type="FunFam" id="3.40.50.150:FF:000006">
    <property type="entry name" value="Ribosomal RNA small subunit methyltransferase A"/>
    <property type="match status" value="1"/>
</dbReference>
<dbReference type="Gene3D" id="1.10.8.100">
    <property type="entry name" value="Ribosomal RNA adenine dimethylase-like, domain 2"/>
    <property type="match status" value="1"/>
</dbReference>
<dbReference type="Gene3D" id="3.40.50.150">
    <property type="entry name" value="Vaccinia Virus protein VP39"/>
    <property type="match status" value="1"/>
</dbReference>
<dbReference type="HAMAP" id="MF_00607">
    <property type="entry name" value="16SrRNA_methyltr_A"/>
    <property type="match status" value="1"/>
</dbReference>
<dbReference type="InterPro" id="IPR001737">
    <property type="entry name" value="KsgA/Erm"/>
</dbReference>
<dbReference type="InterPro" id="IPR023165">
    <property type="entry name" value="rRNA_Ade_diMease-like_C"/>
</dbReference>
<dbReference type="InterPro" id="IPR020596">
    <property type="entry name" value="rRNA_Ade_Mease_Trfase_CS"/>
</dbReference>
<dbReference type="InterPro" id="IPR020598">
    <property type="entry name" value="rRNA_Ade_methylase_Trfase_N"/>
</dbReference>
<dbReference type="InterPro" id="IPR011530">
    <property type="entry name" value="rRNA_adenine_dimethylase"/>
</dbReference>
<dbReference type="InterPro" id="IPR029063">
    <property type="entry name" value="SAM-dependent_MTases_sf"/>
</dbReference>
<dbReference type="NCBIfam" id="TIGR00755">
    <property type="entry name" value="ksgA"/>
    <property type="match status" value="1"/>
</dbReference>
<dbReference type="PANTHER" id="PTHR11727">
    <property type="entry name" value="DIMETHYLADENOSINE TRANSFERASE"/>
    <property type="match status" value="1"/>
</dbReference>
<dbReference type="PANTHER" id="PTHR11727:SF7">
    <property type="entry name" value="DIMETHYLADENOSINE TRANSFERASE-RELATED"/>
    <property type="match status" value="1"/>
</dbReference>
<dbReference type="Pfam" id="PF00398">
    <property type="entry name" value="RrnaAD"/>
    <property type="match status" value="1"/>
</dbReference>
<dbReference type="SMART" id="SM00650">
    <property type="entry name" value="rADc"/>
    <property type="match status" value="1"/>
</dbReference>
<dbReference type="SUPFAM" id="SSF53335">
    <property type="entry name" value="S-adenosyl-L-methionine-dependent methyltransferases"/>
    <property type="match status" value="1"/>
</dbReference>
<dbReference type="PROSITE" id="PS01131">
    <property type="entry name" value="RRNA_A_DIMETH"/>
    <property type="match status" value="1"/>
</dbReference>
<dbReference type="PROSITE" id="PS51689">
    <property type="entry name" value="SAM_RNA_A_N6_MT"/>
    <property type="match status" value="1"/>
</dbReference>
<name>RSMA_ECO45</name>
<feature type="chain" id="PRO_1000130269" description="Ribosomal RNA small subunit methyltransferase A">
    <location>
        <begin position="1"/>
        <end position="273"/>
    </location>
</feature>
<feature type="binding site" evidence="1">
    <location>
        <position position="18"/>
    </location>
    <ligand>
        <name>S-adenosyl-L-methionine</name>
        <dbReference type="ChEBI" id="CHEBI:59789"/>
    </ligand>
</feature>
<feature type="binding site" evidence="1">
    <location>
        <position position="20"/>
    </location>
    <ligand>
        <name>S-adenosyl-L-methionine</name>
        <dbReference type="ChEBI" id="CHEBI:59789"/>
    </ligand>
</feature>
<feature type="binding site" evidence="1">
    <location>
        <position position="45"/>
    </location>
    <ligand>
        <name>S-adenosyl-L-methionine</name>
        <dbReference type="ChEBI" id="CHEBI:59789"/>
    </ligand>
</feature>
<feature type="binding site" evidence="1">
    <location>
        <position position="66"/>
    </location>
    <ligand>
        <name>S-adenosyl-L-methionine</name>
        <dbReference type="ChEBI" id="CHEBI:59789"/>
    </ligand>
</feature>
<feature type="binding site" evidence="1">
    <location>
        <position position="91"/>
    </location>
    <ligand>
        <name>S-adenosyl-L-methionine</name>
        <dbReference type="ChEBI" id="CHEBI:59789"/>
    </ligand>
</feature>
<feature type="binding site" evidence="1">
    <location>
        <position position="113"/>
    </location>
    <ligand>
        <name>S-adenosyl-L-methionine</name>
        <dbReference type="ChEBI" id="CHEBI:59789"/>
    </ligand>
</feature>
<sequence>MNNRVHQGHLARKRFGQNFLNDQFVIDSIVSAINPQKGQAMVEIGPGLAALTEPVGERLDQLTVIELDRDLAARLQTHPFLGPKLTIYQQDAMTFNFGELAAKMGQPLRVFGNLPYNISTPLMFHLFSYTDAIADMHFMLQKEVVNRLVAGPNSKAYGRLSVMAQYYCNVIPVLEVPPSAFTPPPKVDSAVVRLVPHATMPHPVKDVRVLSRITTEAFNQRRKTIRNSLGNLFSVEVLTGMGIDPAMRAENISVAQYCQMANYLAENAPLQES</sequence>
<proteinExistence type="inferred from homology"/>
<keyword id="KW-0963">Cytoplasm</keyword>
<keyword id="KW-0489">Methyltransferase</keyword>
<keyword id="KW-1185">Reference proteome</keyword>
<keyword id="KW-0694">RNA-binding</keyword>
<keyword id="KW-0698">rRNA processing</keyword>
<keyword id="KW-0949">S-adenosyl-L-methionine</keyword>
<keyword id="KW-0808">Transferase</keyword>
<comment type="function">
    <text evidence="1">Specifically dimethylates two adjacent adenosines (A1518 and A1519) in the loop of a conserved hairpin near the 3'-end of 16S rRNA in the 30S particle. May play a critical role in biogenesis of 30S subunits.</text>
</comment>
<comment type="catalytic activity">
    <reaction evidence="1">
        <text>adenosine(1518)/adenosine(1519) in 16S rRNA + 4 S-adenosyl-L-methionine = N(6)-dimethyladenosine(1518)/N(6)-dimethyladenosine(1519) in 16S rRNA + 4 S-adenosyl-L-homocysteine + 4 H(+)</text>
        <dbReference type="Rhea" id="RHEA:19609"/>
        <dbReference type="Rhea" id="RHEA-COMP:10232"/>
        <dbReference type="Rhea" id="RHEA-COMP:10233"/>
        <dbReference type="ChEBI" id="CHEBI:15378"/>
        <dbReference type="ChEBI" id="CHEBI:57856"/>
        <dbReference type="ChEBI" id="CHEBI:59789"/>
        <dbReference type="ChEBI" id="CHEBI:74411"/>
        <dbReference type="ChEBI" id="CHEBI:74493"/>
        <dbReference type="EC" id="2.1.1.182"/>
    </reaction>
</comment>
<comment type="subcellular location">
    <subcellularLocation>
        <location evidence="1">Cytoplasm</location>
    </subcellularLocation>
</comment>
<comment type="similarity">
    <text evidence="1">Belongs to the class I-like SAM-binding methyltransferase superfamily. rRNA adenine N(6)-methyltransferase family. RsmA subfamily.</text>
</comment>